<dbReference type="EMBL" id="Z73551">
    <property type="protein sequence ID" value="CAA97908.1"/>
    <property type="molecule type" value="Genomic_DNA"/>
</dbReference>
<dbReference type="EMBL" id="U36858">
    <property type="protein sequence ID" value="AAA79850.1"/>
    <property type="status" value="ALT_FRAME"/>
    <property type="molecule type" value="Genomic_DNA"/>
</dbReference>
<dbReference type="EMBL" id="BK006949">
    <property type="protein sequence ID" value="DAA11239.1"/>
    <property type="molecule type" value="Genomic_DNA"/>
</dbReference>
<dbReference type="PIR" id="S65214">
    <property type="entry name" value="S65214"/>
</dbReference>
<dbReference type="RefSeq" id="NP_015129.1">
    <property type="nucleotide sequence ID" value="NM_001184009.1"/>
</dbReference>
<dbReference type="PDB" id="7P3X">
    <property type="method" value="EM"/>
    <property type="resolution" value="9.10 A"/>
    <property type="chains" value="A=1-932"/>
</dbReference>
<dbReference type="PDB" id="7P3Y">
    <property type="method" value="EM"/>
    <property type="resolution" value="10.10 A"/>
    <property type="chains" value="A=1-932"/>
</dbReference>
<dbReference type="PDB" id="7P3Z">
    <property type="method" value="EM"/>
    <property type="resolution" value="10.50 A"/>
    <property type="chains" value="A=1-932"/>
</dbReference>
<dbReference type="PDBsum" id="7P3X"/>
<dbReference type="PDBsum" id="7P3Y"/>
<dbReference type="PDBsum" id="7P3Z"/>
<dbReference type="SMR" id="Q08951"/>
<dbReference type="BioGRID" id="35988">
    <property type="interactions" value="671"/>
</dbReference>
<dbReference type="ComplexPortal" id="CPX-535">
    <property type="entry name" value="Adapter complex AP-3"/>
</dbReference>
<dbReference type="DIP" id="DIP-3977N"/>
<dbReference type="FunCoup" id="Q08951">
    <property type="interactions" value="742"/>
</dbReference>
<dbReference type="IntAct" id="Q08951">
    <property type="interactions" value="8"/>
</dbReference>
<dbReference type="MINT" id="Q08951"/>
<dbReference type="STRING" id="4932.YPL195W"/>
<dbReference type="GlyGen" id="Q08951">
    <property type="glycosylation" value="2 sites, 1 O-linked glycan (2 sites)"/>
</dbReference>
<dbReference type="iPTMnet" id="Q08951"/>
<dbReference type="PaxDb" id="4932-YPL195W"/>
<dbReference type="PeptideAtlas" id="Q08951"/>
<dbReference type="EnsemblFungi" id="YPL195W_mRNA">
    <property type="protein sequence ID" value="YPL195W"/>
    <property type="gene ID" value="YPL195W"/>
</dbReference>
<dbReference type="GeneID" id="855906"/>
<dbReference type="KEGG" id="sce:YPL195W"/>
<dbReference type="AGR" id="SGD:S000006116"/>
<dbReference type="SGD" id="S000006116">
    <property type="gene designation" value="APL5"/>
</dbReference>
<dbReference type="VEuPathDB" id="FungiDB:YPL195W"/>
<dbReference type="eggNOG" id="KOG1059">
    <property type="taxonomic scope" value="Eukaryota"/>
</dbReference>
<dbReference type="GeneTree" id="ENSGT00550000075067"/>
<dbReference type="HOGENOM" id="CLU_001908_1_1_1"/>
<dbReference type="InParanoid" id="Q08951"/>
<dbReference type="OMA" id="SGNNWMA"/>
<dbReference type="OrthoDB" id="10264595at2759"/>
<dbReference type="BioCyc" id="YEAST:G3O-34088-MONOMER"/>
<dbReference type="BioGRID-ORCS" id="855906">
    <property type="hits" value="1 hit in 10 CRISPR screens"/>
</dbReference>
<dbReference type="PRO" id="PR:Q08951"/>
<dbReference type="Proteomes" id="UP000002311">
    <property type="component" value="Chromosome XVI"/>
</dbReference>
<dbReference type="RNAct" id="Q08951">
    <property type="molecule type" value="protein"/>
</dbReference>
<dbReference type="GO" id="GO:0030123">
    <property type="term" value="C:AP-3 adaptor complex"/>
    <property type="evidence" value="ECO:0000315"/>
    <property type="project" value="SGD"/>
</dbReference>
<dbReference type="GO" id="GO:0030665">
    <property type="term" value="C:clathrin-coated vesicle membrane"/>
    <property type="evidence" value="ECO:0007669"/>
    <property type="project" value="UniProtKB-SubCell"/>
</dbReference>
<dbReference type="GO" id="GO:0010008">
    <property type="term" value="C:endosome membrane"/>
    <property type="evidence" value="ECO:0000318"/>
    <property type="project" value="GO_Central"/>
</dbReference>
<dbReference type="GO" id="GO:0005794">
    <property type="term" value="C:Golgi apparatus"/>
    <property type="evidence" value="ECO:0007669"/>
    <property type="project" value="UniProtKB-SubCell"/>
</dbReference>
<dbReference type="GO" id="GO:0006896">
    <property type="term" value="P:Golgi to vacuole transport"/>
    <property type="evidence" value="ECO:0000315"/>
    <property type="project" value="ComplexPortal"/>
</dbReference>
<dbReference type="GO" id="GO:0006886">
    <property type="term" value="P:intracellular protein transport"/>
    <property type="evidence" value="ECO:0000303"/>
    <property type="project" value="ComplexPortal"/>
</dbReference>
<dbReference type="GO" id="GO:0006623">
    <property type="term" value="P:protein targeting to vacuole"/>
    <property type="evidence" value="ECO:0000315"/>
    <property type="project" value="SGD"/>
</dbReference>
<dbReference type="FunFam" id="1.25.10.10:FF:000251">
    <property type="entry name" value="AP-3 complex subunit delta"/>
    <property type="match status" value="1"/>
</dbReference>
<dbReference type="Gene3D" id="1.25.10.10">
    <property type="entry name" value="Leucine-rich Repeat Variant"/>
    <property type="match status" value="1"/>
</dbReference>
<dbReference type="InterPro" id="IPR017105">
    <property type="entry name" value="AP3_complex_dsu"/>
</dbReference>
<dbReference type="InterPro" id="IPR011989">
    <property type="entry name" value="ARM-like"/>
</dbReference>
<dbReference type="InterPro" id="IPR016024">
    <property type="entry name" value="ARM-type_fold"/>
</dbReference>
<dbReference type="InterPro" id="IPR002553">
    <property type="entry name" value="Clathrin/coatomer_adapt-like_N"/>
</dbReference>
<dbReference type="PANTHER" id="PTHR22781:SF12">
    <property type="entry name" value="AP-3 COMPLEX SUBUNIT DELTA-1"/>
    <property type="match status" value="1"/>
</dbReference>
<dbReference type="PANTHER" id="PTHR22781">
    <property type="entry name" value="DELTA ADAPTIN-RELATED"/>
    <property type="match status" value="1"/>
</dbReference>
<dbReference type="Pfam" id="PF01602">
    <property type="entry name" value="Adaptin_N"/>
    <property type="match status" value="1"/>
</dbReference>
<dbReference type="PIRSF" id="PIRSF037092">
    <property type="entry name" value="AP3_complex_delta"/>
    <property type="match status" value="1"/>
</dbReference>
<dbReference type="SUPFAM" id="SSF48371">
    <property type="entry name" value="ARM repeat"/>
    <property type="match status" value="1"/>
</dbReference>
<feature type="initiator methionine" description="Removed" evidence="14">
    <location>
        <position position="1"/>
    </location>
</feature>
<feature type="chain" id="PRO_0000227676" description="AP-3 complex subunit delta">
    <location>
        <begin position="2"/>
        <end position="932"/>
    </location>
</feature>
<feature type="repeat" description="HEAT 1">
    <location>
        <begin position="157"/>
        <end position="194"/>
    </location>
</feature>
<feature type="repeat" description="HEAT 2">
    <location>
        <begin position="196"/>
        <end position="231"/>
    </location>
</feature>
<feature type="repeat" description="HEAT 3">
    <location>
        <begin position="233"/>
        <end position="269"/>
    </location>
</feature>
<feature type="repeat" description="HEAT 4">
    <location>
        <begin position="270"/>
        <end position="307"/>
    </location>
</feature>
<feature type="repeat" description="HEAT 5">
    <location>
        <begin position="310"/>
        <end position="346"/>
    </location>
</feature>
<feature type="repeat" description="HEAT 6">
    <location>
        <begin position="347"/>
        <end position="384"/>
    </location>
</feature>
<feature type="repeat" description="HEAT 7">
    <location>
        <begin position="386"/>
        <end position="425"/>
    </location>
</feature>
<feature type="repeat" description="HEAT 8">
    <location>
        <begin position="427"/>
        <end position="466"/>
    </location>
</feature>
<feature type="repeat" description="HEAT 9">
    <location>
        <begin position="490"/>
        <end position="527"/>
    </location>
</feature>
<feature type="repeat" description="HEAT 10">
    <location>
        <begin position="528"/>
        <end position="564"/>
    </location>
</feature>
<feature type="repeat" description="HEAT 11">
    <location>
        <begin position="570"/>
        <end position="601"/>
    </location>
</feature>
<feature type="repeat" description="HEAT 12">
    <location>
        <begin position="602"/>
        <end position="638"/>
    </location>
</feature>
<feature type="region of interest" description="Disordered" evidence="2">
    <location>
        <begin position="720"/>
        <end position="868"/>
    </location>
</feature>
<feature type="region of interest" description="Disordered" evidence="2">
    <location>
        <begin position="897"/>
        <end position="932"/>
    </location>
</feature>
<feature type="coiled-coil region" evidence="1">
    <location>
        <begin position="858"/>
        <end position="878"/>
    </location>
</feature>
<feature type="compositionally biased region" description="Basic and acidic residues" evidence="2">
    <location>
        <begin position="738"/>
        <end position="747"/>
    </location>
</feature>
<feature type="compositionally biased region" description="Basic and acidic residues" evidence="2">
    <location>
        <begin position="755"/>
        <end position="766"/>
    </location>
</feature>
<feature type="compositionally biased region" description="Low complexity" evidence="2">
    <location>
        <begin position="767"/>
        <end position="779"/>
    </location>
</feature>
<feature type="compositionally biased region" description="Basic residues" evidence="2">
    <location>
        <begin position="783"/>
        <end position="793"/>
    </location>
</feature>
<feature type="compositionally biased region" description="Basic and acidic residues" evidence="2">
    <location>
        <begin position="806"/>
        <end position="832"/>
    </location>
</feature>
<feature type="compositionally biased region" description="Polar residues" evidence="2">
    <location>
        <begin position="838"/>
        <end position="855"/>
    </location>
</feature>
<feature type="compositionally biased region" description="Basic and acidic residues" evidence="2">
    <location>
        <begin position="857"/>
        <end position="868"/>
    </location>
</feature>
<feature type="compositionally biased region" description="Basic residues" evidence="2">
    <location>
        <begin position="897"/>
        <end position="915"/>
    </location>
</feature>
<feature type="compositionally biased region" description="Basic and acidic residues" evidence="2">
    <location>
        <begin position="923"/>
        <end position="932"/>
    </location>
</feature>
<feature type="modified residue" description="N-acetylthreonine" evidence="14">
    <location>
        <position position="2"/>
    </location>
</feature>
<feature type="modified residue" description="Phosphoserine" evidence="13">
    <location>
        <position position="700"/>
    </location>
</feature>
<feature type="modified residue" description="Phosphoserine" evidence="12">
    <location>
        <position position="727"/>
    </location>
</feature>
<feature type="modified residue" description="Phosphothreonine" evidence="11 13">
    <location>
        <position position="767"/>
    </location>
</feature>
<feature type="modified residue" description="Phosphoserine" evidence="13">
    <location>
        <position position="770"/>
    </location>
</feature>
<feature type="modified residue" description="Phosphoserine" evidence="13">
    <location>
        <position position="773"/>
    </location>
</feature>
<feature type="modified residue" description="Phosphoserine" evidence="12 13">
    <location>
        <position position="798"/>
    </location>
</feature>
<feature type="modified residue" description="Phosphoserine" evidence="11 13">
    <location>
        <position position="888"/>
    </location>
</feature>
<feature type="modified residue" description="Phosphoserine" evidence="11 12 13">
    <location>
        <position position="918"/>
    </location>
</feature>
<accession>Q08951</accession>
<accession>D6W3H3</accession>
<accession>Q02737</accession>
<accession>Q7LIB1</accession>
<evidence type="ECO:0000255" key="1"/>
<evidence type="ECO:0000256" key="2">
    <source>
        <dbReference type="SAM" id="MobiDB-lite"/>
    </source>
</evidence>
<evidence type="ECO:0000269" key="3">
    <source>
    </source>
</evidence>
<evidence type="ECO:0000269" key="4">
    <source>
    </source>
</evidence>
<evidence type="ECO:0000269" key="5">
    <source>
    </source>
</evidence>
<evidence type="ECO:0000269" key="6">
    <source>
    </source>
</evidence>
<evidence type="ECO:0000269" key="7">
    <source>
    </source>
</evidence>
<evidence type="ECO:0000269" key="8">
    <source>
    </source>
</evidence>
<evidence type="ECO:0000305" key="9"/>
<evidence type="ECO:0000305" key="10">
    <source>
    </source>
</evidence>
<evidence type="ECO:0007744" key="11">
    <source>
    </source>
</evidence>
<evidence type="ECO:0007744" key="12">
    <source>
    </source>
</evidence>
<evidence type="ECO:0007744" key="13">
    <source>
    </source>
</evidence>
<evidence type="ECO:0007744" key="14">
    <source>
    </source>
</evidence>
<gene>
    <name type="primary">APL5</name>
    <name type="synonym">YKS4</name>
    <name type="ordered locus">YPL195W</name>
</gene>
<organism>
    <name type="scientific">Saccharomyces cerevisiae (strain ATCC 204508 / S288c)</name>
    <name type="common">Baker's yeast</name>
    <dbReference type="NCBI Taxonomy" id="559292"/>
    <lineage>
        <taxon>Eukaryota</taxon>
        <taxon>Fungi</taxon>
        <taxon>Dikarya</taxon>
        <taxon>Ascomycota</taxon>
        <taxon>Saccharomycotina</taxon>
        <taxon>Saccharomycetes</taxon>
        <taxon>Saccharomycetales</taxon>
        <taxon>Saccharomycetaceae</taxon>
        <taxon>Saccharomyces</taxon>
    </lineage>
</organism>
<name>AP3D_YEAST</name>
<keyword id="KW-0002">3D-structure</keyword>
<keyword id="KW-0007">Acetylation</keyword>
<keyword id="KW-0175">Coiled coil</keyword>
<keyword id="KW-0968">Cytoplasmic vesicle</keyword>
<keyword id="KW-0333">Golgi apparatus</keyword>
<keyword id="KW-0472">Membrane</keyword>
<keyword id="KW-0597">Phosphoprotein</keyword>
<keyword id="KW-0653">Protein transport</keyword>
<keyword id="KW-1185">Reference proteome</keyword>
<keyword id="KW-0677">Repeat</keyword>
<keyword id="KW-0813">Transport</keyword>
<sequence length="932" mass="106924">MTSLYAPGAEDIRQRLRPFGFFFEKSLKDLIKGIRSHNETPEKLDQFFKQVLSECREEVNSPDLNSKTNAVLKLTYLEMYGFDMAWCNFHILEVMSSNKLQQKRVGYLAASQSFYKDSDILMLATNLLKKDLKYDGNNDVVKVGIALSGLSTIITPSLARDIADDLFTMLNSTRPYIRKKAITALFKVFLQYPEALRDNFDKFVSKLDDDDISVVSAAVSVICELSKKNPQPFIQLSPLLYEILVTIDNNWIIIRLLKLFTNLSQVEPKLRAKLLPKILELMESTVATSVIYESVNCIVKGNMLEEDDFETAMACLERLHTFCDSQDPNLRYISCILFYKIGKINTDFISRFDQLIIRLLSDVDVSIRSKAIELVEGIVDEDNLKAIVQTLMKQFVDEDVVILQTGSIVYEKSKRIPIIIPENYKIKMVNVIISICSADNYSSVNDFEWYNAVIMDLAMLCQDISDKSLGSKIGEQFRNLMIKVPSMREVTIANIIKLISNDNINKQLPTVLRECIWCLGEFSTLVENGNDLIKIMTENISYYSHSVQEVLILALVKVFSNWCNNFQEDKRFEIKMVLKELIEFFENLSYSSTFEVQERSVEVLEFLRLSLEALEEDTEGLPMLLSEVLPSFFNAYELAPIARGTQLKLAVDENLDLETPFLTKEAADELLDEQKSDAISDLMSDISMDEQVELKFVDDSDTSYEEKEKLDDFENPFEIEREKERMSNPYYLGEEDEERTKNSKDLLDLNEEESSDKKPETIRLNRTDNSLNSLSLSTTEISRKKKKGKKKNRVQVLSDEPVIEAAPKRKDAFQKPHDNHSTQNPLKKDKINLRMHSQLENFDFSNFGQSSNAGRGSQEEGNLRKEDELELSRLEANLIVKDEKDNLSDTEEVIVIKKKKKGKKSKSKNKLKTKAKNSPEPNEFLRDQSTDI</sequence>
<comment type="function">
    <text evidence="3 7 8">Part of the AP-3 complex, an adaptor-related complex which is not clathrin-associated. The complex is associated with the Golgi region as well as more peripheral structures. It facilitates the budding of vesicles from the Golgi membrane and may be directly involved in trafficking to the vacuole. Required for the transport via the ALP pathway, which directs the transport of the cargo proteins PHO8 and VAM3 to the vacuole.</text>
</comment>
<comment type="subunit">
    <text evidence="3 4">Adaptor protein complex 3 (AP-3) is a heterotetramer composed of 2 large adaptins (APL5 and APL6), a medium adaptin (APM3) and a small adaptin (APS3). Interacts with VPS41.</text>
</comment>
<comment type="interaction">
    <interactant intactId="EBI-29702">
        <id>Q08951</id>
    </interactant>
    <interactant intactId="EBI-2213">
        <id>P46682</id>
        <label>APL6</label>
    </interactant>
    <organismsDiffer>false</organismsDiffer>
    <experiments>6</experiments>
</comment>
<comment type="interaction">
    <interactant intactId="EBI-29702">
        <id>Q08951</id>
    </interactant>
    <interactant intactId="EBI-2710">
        <id>P38153</id>
        <label>APM3</label>
    </interactant>
    <organismsDiffer>false</organismsDiffer>
    <experiments>5</experiments>
</comment>
<comment type="interaction">
    <interactant intactId="EBI-29702">
        <id>Q08951</id>
    </interactant>
    <interactant intactId="EBI-2619">
        <id>P47064</id>
        <label>APS3</label>
    </interactant>
    <organismsDiffer>false</organismsDiffer>
    <experiments>4</experiments>
</comment>
<comment type="subcellular location">
    <subcellularLocation>
        <location evidence="3 5">Golgi apparatus</location>
    </subcellularLocation>
    <subcellularLocation>
        <location evidence="3">Cytoplasmic vesicle</location>
        <location evidence="3">Clathrin-coated vesicle membrane</location>
        <topology evidence="10">Peripheral membrane protein</topology>
        <orientation evidence="10">Cytoplasmic side</orientation>
    </subcellularLocation>
    <text evidence="3">Component of the coat surrounding the cytoplasmic face of coated vesicles located at the Golgi complex.</text>
</comment>
<comment type="miscellaneous">
    <text evidence="6">Present with 13500 molecules/cell in log phase SD medium.</text>
</comment>
<comment type="similarity">
    <text evidence="9">Belongs to the adaptor complexes large subunit family.</text>
</comment>
<comment type="sequence caution" evidence="9">
    <conflict type="frameshift">
        <sequence resource="EMBL-CDS" id="AAA79850"/>
    </conflict>
</comment>
<reference key="1">
    <citation type="journal article" date="1997" name="Nature">
        <title>The nucleotide sequence of Saccharomyces cerevisiae chromosome XVI.</title>
        <authorList>
            <person name="Bussey H."/>
            <person name="Storms R.K."/>
            <person name="Ahmed A."/>
            <person name="Albermann K."/>
            <person name="Allen E."/>
            <person name="Ansorge W."/>
            <person name="Araujo R."/>
            <person name="Aparicio A."/>
            <person name="Barrell B.G."/>
            <person name="Badcock K."/>
            <person name="Benes V."/>
            <person name="Botstein D."/>
            <person name="Bowman S."/>
            <person name="Brueckner M."/>
            <person name="Carpenter J."/>
            <person name="Cherry J.M."/>
            <person name="Chung E."/>
            <person name="Churcher C.M."/>
            <person name="Coster F."/>
            <person name="Davis K."/>
            <person name="Davis R.W."/>
            <person name="Dietrich F.S."/>
            <person name="Delius H."/>
            <person name="DiPaolo T."/>
            <person name="Dubois E."/>
            <person name="Duesterhoeft A."/>
            <person name="Duncan M."/>
            <person name="Floeth M."/>
            <person name="Fortin N."/>
            <person name="Friesen J.D."/>
            <person name="Fritz C."/>
            <person name="Goffeau A."/>
            <person name="Hall J."/>
            <person name="Hebling U."/>
            <person name="Heumann K."/>
            <person name="Hilbert H."/>
            <person name="Hillier L.W."/>
            <person name="Hunicke-Smith S."/>
            <person name="Hyman R.W."/>
            <person name="Johnston M."/>
            <person name="Kalman S."/>
            <person name="Kleine K."/>
            <person name="Komp C."/>
            <person name="Kurdi O."/>
            <person name="Lashkari D."/>
            <person name="Lew H."/>
            <person name="Lin A."/>
            <person name="Lin D."/>
            <person name="Louis E.J."/>
            <person name="Marathe R."/>
            <person name="Messenguy F."/>
            <person name="Mewes H.-W."/>
            <person name="Mirtipati S."/>
            <person name="Moestl D."/>
            <person name="Mueller-Auer S."/>
            <person name="Namath A."/>
            <person name="Nentwich U."/>
            <person name="Oefner P."/>
            <person name="Pearson D."/>
            <person name="Petel F.X."/>
            <person name="Pohl T.M."/>
            <person name="Purnelle B."/>
            <person name="Rajandream M.A."/>
            <person name="Rechmann S."/>
            <person name="Rieger M."/>
            <person name="Riles L."/>
            <person name="Roberts D."/>
            <person name="Schaefer M."/>
            <person name="Scharfe M."/>
            <person name="Scherens B."/>
            <person name="Schramm S."/>
            <person name="Schroeder M."/>
            <person name="Sdicu A.-M."/>
            <person name="Tettelin H."/>
            <person name="Urrestarazu L.A."/>
            <person name="Ushinsky S."/>
            <person name="Vierendeels F."/>
            <person name="Vissers S."/>
            <person name="Voss H."/>
            <person name="Walsh S.V."/>
            <person name="Wambutt R."/>
            <person name="Wang Y."/>
            <person name="Wedler E."/>
            <person name="Wedler H."/>
            <person name="Winnett E."/>
            <person name="Zhong W.-W."/>
            <person name="Zollner A."/>
            <person name="Vo D.H."/>
            <person name="Hani J."/>
        </authorList>
    </citation>
    <scope>NUCLEOTIDE SEQUENCE [LARGE SCALE GENOMIC DNA]</scope>
    <source>
        <strain>ATCC 204508 / S288c</strain>
    </source>
</reference>
<reference key="2">
    <citation type="journal article" date="2014" name="G3 (Bethesda)">
        <title>The reference genome sequence of Saccharomyces cerevisiae: Then and now.</title>
        <authorList>
            <person name="Engel S.R."/>
            <person name="Dietrich F.S."/>
            <person name="Fisk D.G."/>
            <person name="Binkley G."/>
            <person name="Balakrishnan R."/>
            <person name="Costanzo M.C."/>
            <person name="Dwight S.S."/>
            <person name="Hitz B.C."/>
            <person name="Karra K."/>
            <person name="Nash R.S."/>
            <person name="Weng S."/>
            <person name="Wong E.D."/>
            <person name="Lloyd P."/>
            <person name="Skrzypek M.S."/>
            <person name="Miyasato S.R."/>
            <person name="Simison M."/>
            <person name="Cherry J.M."/>
        </authorList>
    </citation>
    <scope>GENOME REANNOTATION</scope>
    <source>
        <strain>ATCC 204508 / S288c</strain>
    </source>
</reference>
<reference key="3">
    <citation type="submission" date="1995-09" db="EMBL/GenBank/DDBJ databases">
        <title>Suppressors of loss of yeast casein kinase 1 function define the four subunits of a novel putative adaptin complex.</title>
        <authorList>
            <person name="Robinson L.C."/>
            <person name="Engle H.M."/>
            <person name="Panek H.R."/>
        </authorList>
    </citation>
    <scope>NUCLEOTIDE SEQUENCE [GENOMIC DNA] OF 8-932</scope>
</reference>
<reference key="4">
    <citation type="journal article" date="1997" name="Cell">
        <title>The AP-3 adaptor complex is essential for cargo-selective transport to the yeast vacuole.</title>
        <authorList>
            <person name="Cowles C.R."/>
            <person name="Odorizzi G."/>
            <person name="Payne G.S."/>
            <person name="Emr S.D."/>
        </authorList>
    </citation>
    <scope>IDENTIFICATION OF THE AP-3 COMPLEX</scope>
    <scope>FUNCTION OF THE AP-3 COMPLEX</scope>
</reference>
<reference key="5">
    <citation type="journal article" date="1997" name="EMBO J.">
        <title>Suppressors of YCK-encoded yeast casein kinase 1 deficiency define the four subunits of a novel clathrin AP-like complex.</title>
        <authorList>
            <person name="Panek H.R."/>
            <person name="Stepp J.D."/>
            <person name="Engle H.M."/>
            <person name="Marks K.M."/>
            <person name="Tan P.K."/>
            <person name="Lemmon S.K."/>
            <person name="Robinson L.C."/>
        </authorList>
    </citation>
    <scope>IDENTIFICATION OF THE AP-3 COMPLEX</scope>
    <scope>FUNCTION OF THE AP-3 COMPLEX</scope>
</reference>
<reference key="6">
    <citation type="journal article" date="1999" name="Nat. Cell Biol.">
        <title>Formation of AP-3 transport intermediates requires Vps41 function.</title>
        <authorList>
            <person name="Rehling P."/>
            <person name="Darsow T."/>
            <person name="Katzmann D.J."/>
            <person name="Emr S.D."/>
        </authorList>
    </citation>
    <scope>SUBCELLULAR LOCATION</scope>
    <scope>INTERACTION WITH VPS41</scope>
    <scope>FUNCTION OF THE AP-3 COMPLEX</scope>
</reference>
<reference key="7">
    <citation type="journal article" date="2001" name="Mol. Biol. Cell">
        <title>Vps41p function in the alkaline phosphatase pathway requires homo-oligomerization and interaction with AP-3 through two distinct domains.</title>
        <authorList>
            <person name="Darsow T."/>
            <person name="Katzmann D.J."/>
            <person name="Cowles C.R."/>
            <person name="Emr S.D."/>
        </authorList>
    </citation>
    <scope>INTERACTION WITH VPS41</scope>
</reference>
<reference key="8">
    <citation type="journal article" date="2003" name="Nature">
        <title>Global analysis of protein localization in budding yeast.</title>
        <authorList>
            <person name="Huh W.-K."/>
            <person name="Falvo J.V."/>
            <person name="Gerke L.C."/>
            <person name="Carroll A.S."/>
            <person name="Howson R.W."/>
            <person name="Weissman J.S."/>
            <person name="O'Shea E.K."/>
        </authorList>
    </citation>
    <scope>SUBCELLULAR LOCATION [LARGE SCALE ANALYSIS]</scope>
</reference>
<reference key="9">
    <citation type="journal article" date="2003" name="Nature">
        <title>Global analysis of protein expression in yeast.</title>
        <authorList>
            <person name="Ghaemmaghami S."/>
            <person name="Huh W.-K."/>
            <person name="Bower K."/>
            <person name="Howson R.W."/>
            <person name="Belle A."/>
            <person name="Dephoure N."/>
            <person name="O'Shea E.K."/>
            <person name="Weissman J.S."/>
        </authorList>
    </citation>
    <scope>LEVEL OF PROTEIN EXPRESSION [LARGE SCALE ANALYSIS]</scope>
</reference>
<reference key="10">
    <citation type="journal article" date="2007" name="J. Proteome Res.">
        <title>Large-scale phosphorylation analysis of alpha-factor-arrested Saccharomyces cerevisiae.</title>
        <authorList>
            <person name="Li X."/>
            <person name="Gerber S.A."/>
            <person name="Rudner A.D."/>
            <person name="Beausoleil S.A."/>
            <person name="Haas W."/>
            <person name="Villen J."/>
            <person name="Elias J.E."/>
            <person name="Gygi S.P."/>
        </authorList>
    </citation>
    <scope>PHOSPHORYLATION [LARGE SCALE ANALYSIS] AT THR-767; SER-888 AND SER-918</scope>
    <scope>IDENTIFICATION BY MASS SPECTROMETRY [LARGE SCALE ANALYSIS]</scope>
    <source>
        <strain>ADR376</strain>
    </source>
</reference>
<reference key="11">
    <citation type="journal article" date="2008" name="Mol. Cell. Proteomics">
        <title>A multidimensional chromatography technology for in-depth phosphoproteome analysis.</title>
        <authorList>
            <person name="Albuquerque C.P."/>
            <person name="Smolka M.B."/>
            <person name="Payne S.H."/>
            <person name="Bafna V."/>
            <person name="Eng J."/>
            <person name="Zhou H."/>
        </authorList>
    </citation>
    <scope>PHOSPHORYLATION [LARGE SCALE ANALYSIS] AT SER-727; SER-798 AND SER-918</scope>
    <scope>IDENTIFICATION BY MASS SPECTROMETRY [LARGE SCALE ANALYSIS]</scope>
</reference>
<reference key="12">
    <citation type="journal article" date="2009" name="Science">
        <title>Global analysis of Cdk1 substrate phosphorylation sites provides insights into evolution.</title>
        <authorList>
            <person name="Holt L.J."/>
            <person name="Tuch B.B."/>
            <person name="Villen J."/>
            <person name="Johnson A.D."/>
            <person name="Gygi S.P."/>
            <person name="Morgan D.O."/>
        </authorList>
    </citation>
    <scope>PHOSPHORYLATION [LARGE SCALE ANALYSIS] AT SER-700; THR-767; SER-770; SER-773; SER-798; SER-888 AND SER-918</scope>
    <scope>IDENTIFICATION BY MASS SPECTROMETRY [LARGE SCALE ANALYSIS]</scope>
</reference>
<reference key="13">
    <citation type="journal article" date="2012" name="Proc. Natl. Acad. Sci. U.S.A.">
        <title>N-terminal acetylome analyses and functional insights of the N-terminal acetyltransferase NatB.</title>
        <authorList>
            <person name="Van Damme P."/>
            <person name="Lasa M."/>
            <person name="Polevoda B."/>
            <person name="Gazquez C."/>
            <person name="Elosegui-Artola A."/>
            <person name="Kim D.S."/>
            <person name="De Juan-Pardo E."/>
            <person name="Demeyer K."/>
            <person name="Hole K."/>
            <person name="Larrea E."/>
            <person name="Timmerman E."/>
            <person name="Prieto J."/>
            <person name="Arnesen T."/>
            <person name="Sherman F."/>
            <person name="Gevaert K."/>
            <person name="Aldabe R."/>
        </authorList>
    </citation>
    <scope>ACETYLATION [LARGE SCALE ANALYSIS] AT THR-2</scope>
    <scope>CLEAVAGE OF INITIATOR METHIONINE [LARGE SCALE ANALYSIS]</scope>
    <scope>IDENTIFICATION BY MASS SPECTROMETRY [LARGE SCALE ANALYSIS]</scope>
</reference>
<protein>
    <recommendedName>
        <fullName>AP-3 complex subunit delta</fullName>
    </recommendedName>
    <alternativeName>
        <fullName>Adaptor-related protein complex 3 subunit delta</fullName>
    </alternativeName>
    <alternativeName>
        <fullName>Delta-adaptin 3</fullName>
        <shortName>Delta-adaptin</shortName>
    </alternativeName>
</protein>
<proteinExistence type="evidence at protein level"/>